<keyword id="KW-0963">Cytoplasm</keyword>
<keyword id="KW-0285">Flavoprotein</keyword>
<keyword id="KW-0288">FMN</keyword>
<keyword id="KW-0520">NAD</keyword>
<keyword id="KW-0560">Oxidoreductase</keyword>
<keyword id="KW-0665">Pyrimidine biosynthesis</keyword>
<dbReference type="EC" id="1.3.1.14"/>
<dbReference type="EMBL" id="CP000764">
    <property type="protein sequence ID" value="ABS22767.1"/>
    <property type="molecule type" value="Genomic_DNA"/>
</dbReference>
<dbReference type="RefSeq" id="WP_012094974.1">
    <property type="nucleotide sequence ID" value="NC_009674.1"/>
</dbReference>
<dbReference type="SMR" id="A7GRK9"/>
<dbReference type="STRING" id="315749.Bcer98_2533"/>
<dbReference type="GeneID" id="33897787"/>
<dbReference type="KEGG" id="bcy:Bcer98_2533"/>
<dbReference type="eggNOG" id="COG0167">
    <property type="taxonomic scope" value="Bacteria"/>
</dbReference>
<dbReference type="HOGENOM" id="CLU_042042_0_0_9"/>
<dbReference type="OrthoDB" id="9794954at2"/>
<dbReference type="UniPathway" id="UPA00070">
    <property type="reaction ID" value="UER00945"/>
</dbReference>
<dbReference type="Proteomes" id="UP000002300">
    <property type="component" value="Chromosome"/>
</dbReference>
<dbReference type="GO" id="GO:0005737">
    <property type="term" value="C:cytoplasm"/>
    <property type="evidence" value="ECO:0007669"/>
    <property type="project" value="UniProtKB-SubCell"/>
</dbReference>
<dbReference type="GO" id="GO:0004589">
    <property type="term" value="F:dihydroorotate dehydrogenase (NAD+) activity"/>
    <property type="evidence" value="ECO:0007669"/>
    <property type="project" value="UniProtKB-EC"/>
</dbReference>
<dbReference type="GO" id="GO:0006207">
    <property type="term" value="P:'de novo' pyrimidine nucleobase biosynthetic process"/>
    <property type="evidence" value="ECO:0007669"/>
    <property type="project" value="InterPro"/>
</dbReference>
<dbReference type="GO" id="GO:0044205">
    <property type="term" value="P:'de novo' UMP biosynthetic process"/>
    <property type="evidence" value="ECO:0007669"/>
    <property type="project" value="UniProtKB-UniRule"/>
</dbReference>
<dbReference type="CDD" id="cd04740">
    <property type="entry name" value="DHOD_1B_like"/>
    <property type="match status" value="1"/>
</dbReference>
<dbReference type="FunFam" id="3.20.20.70:FF:000069">
    <property type="entry name" value="Dihydroorotate dehydrogenase"/>
    <property type="match status" value="1"/>
</dbReference>
<dbReference type="Gene3D" id="3.20.20.70">
    <property type="entry name" value="Aldolase class I"/>
    <property type="match status" value="1"/>
</dbReference>
<dbReference type="HAMAP" id="MF_00224">
    <property type="entry name" value="DHO_dh_type1"/>
    <property type="match status" value="1"/>
</dbReference>
<dbReference type="InterPro" id="IPR013785">
    <property type="entry name" value="Aldolase_TIM"/>
</dbReference>
<dbReference type="InterPro" id="IPR050074">
    <property type="entry name" value="DHO_dehydrogenase"/>
</dbReference>
<dbReference type="InterPro" id="IPR033888">
    <property type="entry name" value="DHOD_1B"/>
</dbReference>
<dbReference type="InterPro" id="IPR024920">
    <property type="entry name" value="Dihydroorotate_DH_1"/>
</dbReference>
<dbReference type="InterPro" id="IPR012135">
    <property type="entry name" value="Dihydroorotate_DH_1_2"/>
</dbReference>
<dbReference type="InterPro" id="IPR005720">
    <property type="entry name" value="Dihydroorotate_DH_cat"/>
</dbReference>
<dbReference type="InterPro" id="IPR001295">
    <property type="entry name" value="Dihydroorotate_DH_CS"/>
</dbReference>
<dbReference type="InterPro" id="IPR049622">
    <property type="entry name" value="Dihydroorotate_DH_I"/>
</dbReference>
<dbReference type="NCBIfam" id="NF005574">
    <property type="entry name" value="PRK07259.1"/>
    <property type="match status" value="1"/>
</dbReference>
<dbReference type="NCBIfam" id="TIGR01037">
    <property type="entry name" value="pyrD_sub1_fam"/>
    <property type="match status" value="1"/>
</dbReference>
<dbReference type="PANTHER" id="PTHR48109:SF1">
    <property type="entry name" value="DIHYDROOROTATE DEHYDROGENASE (FUMARATE)"/>
    <property type="match status" value="1"/>
</dbReference>
<dbReference type="PANTHER" id="PTHR48109">
    <property type="entry name" value="DIHYDROOROTATE DEHYDROGENASE (QUINONE), MITOCHONDRIAL-RELATED"/>
    <property type="match status" value="1"/>
</dbReference>
<dbReference type="Pfam" id="PF01180">
    <property type="entry name" value="DHO_dh"/>
    <property type="match status" value="1"/>
</dbReference>
<dbReference type="PIRSF" id="PIRSF000164">
    <property type="entry name" value="DHO_oxidase"/>
    <property type="match status" value="1"/>
</dbReference>
<dbReference type="SUPFAM" id="SSF51395">
    <property type="entry name" value="FMN-linked oxidoreductases"/>
    <property type="match status" value="1"/>
</dbReference>
<dbReference type="PROSITE" id="PS00911">
    <property type="entry name" value="DHODEHASE_1"/>
    <property type="match status" value="1"/>
</dbReference>
<dbReference type="PROSITE" id="PS00912">
    <property type="entry name" value="DHODEHASE_2"/>
    <property type="match status" value="1"/>
</dbReference>
<reference key="1">
    <citation type="journal article" date="2008" name="Chem. Biol. Interact.">
        <title>Extending the Bacillus cereus group genomics to putative food-borne pathogens of different toxicity.</title>
        <authorList>
            <person name="Lapidus A."/>
            <person name="Goltsman E."/>
            <person name="Auger S."/>
            <person name="Galleron N."/>
            <person name="Segurens B."/>
            <person name="Dossat C."/>
            <person name="Land M.L."/>
            <person name="Broussolle V."/>
            <person name="Brillard J."/>
            <person name="Guinebretiere M.-H."/>
            <person name="Sanchis V."/>
            <person name="Nguen-the C."/>
            <person name="Lereclus D."/>
            <person name="Richardson P."/>
            <person name="Wincker P."/>
            <person name="Weissenbach J."/>
            <person name="Ehrlich S.D."/>
            <person name="Sorokin A."/>
        </authorList>
    </citation>
    <scope>NUCLEOTIDE SEQUENCE [LARGE SCALE GENOMIC DNA]</scope>
    <source>
        <strain>DSM 22905 / CIP 110041 / 391-98 / NVH 391-98</strain>
    </source>
</reference>
<sequence length="309" mass="32931">MNRLQVELPGLSLKNPIIPASGCFGFGREYAQFYDLNVLGSIMIKATTEQPRYGNPTPRVAETPGGMLNAIGLQNPGLEKVMGSELPWLEQFDLPIIANVAGSQVEDYVAVAKKISKAPNVHALELNISCPNVKTGGIAFGTNPEIAADLTKRVKEVSEVPVYVKLSPNVTNIVEIAKAIENAGADGLTMINTLLGMRLDLKTAKPILANRTGGLSGPAIKPVAIRMVHEVSQVVDIPIIGMGGIESAEDVIEFFYAGASAVAVGTANFVDPLVCPTIIEELPSLLDELGFGHISECQGRSWKQVCQSR</sequence>
<evidence type="ECO:0000250" key="1"/>
<evidence type="ECO:0000305" key="2"/>
<gene>
    <name type="primary">pyrD</name>
    <name type="ordered locus">Bcer98_2533</name>
</gene>
<protein>
    <recommendedName>
        <fullName>Dihydroorotate dehydrogenase B (NAD(+)), catalytic subunit</fullName>
        <shortName>DHOD B</shortName>
        <shortName>DHODase B</shortName>
        <shortName>DHOdehase B</shortName>
        <ecNumber>1.3.1.14</ecNumber>
    </recommendedName>
    <alternativeName>
        <fullName>Dihydroorotate oxidase B</fullName>
    </alternativeName>
    <alternativeName>
        <fullName>Orotate reductase (NADH)</fullName>
    </alternativeName>
</protein>
<proteinExistence type="inferred from homology"/>
<accession>A7GRK9</accession>
<organism>
    <name type="scientific">Bacillus cytotoxicus (strain DSM 22905 / CIP 110041 / 391-98 / NVH 391-98)</name>
    <dbReference type="NCBI Taxonomy" id="315749"/>
    <lineage>
        <taxon>Bacteria</taxon>
        <taxon>Bacillati</taxon>
        <taxon>Bacillota</taxon>
        <taxon>Bacilli</taxon>
        <taxon>Bacillales</taxon>
        <taxon>Bacillaceae</taxon>
        <taxon>Bacillus</taxon>
        <taxon>Bacillus cereus group</taxon>
    </lineage>
</organism>
<comment type="function">
    <text evidence="1">Catalyzes the conversion of dihydroorotate to orotate with NAD(+) as electron acceptor.</text>
</comment>
<comment type="catalytic activity">
    <reaction>
        <text>(S)-dihydroorotate + NAD(+) = orotate + NADH + H(+)</text>
        <dbReference type="Rhea" id="RHEA:13513"/>
        <dbReference type="ChEBI" id="CHEBI:15378"/>
        <dbReference type="ChEBI" id="CHEBI:30839"/>
        <dbReference type="ChEBI" id="CHEBI:30864"/>
        <dbReference type="ChEBI" id="CHEBI:57540"/>
        <dbReference type="ChEBI" id="CHEBI:57945"/>
        <dbReference type="EC" id="1.3.1.14"/>
    </reaction>
</comment>
<comment type="cofactor">
    <cofactor evidence="1">
        <name>FMN</name>
        <dbReference type="ChEBI" id="CHEBI:58210"/>
    </cofactor>
    <text evidence="1">Binds 1 FMN per subunit.</text>
</comment>
<comment type="pathway">
    <text>Pyrimidine metabolism; UMP biosynthesis via de novo pathway; orotate from (S)-dihydroorotate (NAD(+) route): step 1/1.</text>
</comment>
<comment type="subunit">
    <text evidence="1">Heterotetramer of 2 PyrK and 2 PyrD type B subunits.</text>
</comment>
<comment type="subcellular location">
    <subcellularLocation>
        <location evidence="1">Cytoplasm</location>
    </subcellularLocation>
</comment>
<comment type="similarity">
    <text evidence="2">Belongs to the dihydroorotate dehydrogenase family. Type 1 subfamily.</text>
</comment>
<name>PYRDB_BACCN</name>
<feature type="chain" id="PRO_1000078152" description="Dihydroorotate dehydrogenase B (NAD(+)), catalytic subunit">
    <location>
        <begin position="1"/>
        <end position="309"/>
    </location>
</feature>
<feature type="active site" description="Nucleophile">
    <location>
        <position position="130"/>
    </location>
</feature>
<feature type="binding site" evidence="1">
    <location>
        <position position="21"/>
    </location>
    <ligand>
        <name>FMN</name>
        <dbReference type="ChEBI" id="CHEBI:58210"/>
    </ligand>
</feature>
<feature type="binding site" evidence="1">
    <location>
        <begin position="45"/>
        <end position="46"/>
    </location>
    <ligand>
        <name>FMN</name>
        <dbReference type="ChEBI" id="CHEBI:58210"/>
    </ligand>
</feature>
<feature type="binding site" evidence="1">
    <location>
        <position position="45"/>
    </location>
    <ligand>
        <name>substrate</name>
    </ligand>
</feature>
<feature type="binding site" evidence="1">
    <location>
        <begin position="69"/>
        <end position="73"/>
    </location>
    <ligand>
        <name>substrate</name>
    </ligand>
</feature>
<feature type="binding site" evidence="1">
    <location>
        <position position="99"/>
    </location>
    <ligand>
        <name>FMN</name>
        <dbReference type="ChEBI" id="CHEBI:58210"/>
    </ligand>
</feature>
<feature type="binding site" evidence="1">
    <location>
        <position position="127"/>
    </location>
    <ligand>
        <name>FMN</name>
        <dbReference type="ChEBI" id="CHEBI:58210"/>
    </ligand>
</feature>
<feature type="binding site" evidence="1">
    <location>
        <position position="127"/>
    </location>
    <ligand>
        <name>substrate</name>
    </ligand>
</feature>
<feature type="binding site" evidence="1">
    <location>
        <position position="165"/>
    </location>
    <ligand>
        <name>FMN</name>
        <dbReference type="ChEBI" id="CHEBI:58210"/>
    </ligand>
</feature>
<feature type="binding site" evidence="1">
    <location>
        <position position="191"/>
    </location>
    <ligand>
        <name>FMN</name>
        <dbReference type="ChEBI" id="CHEBI:58210"/>
    </ligand>
</feature>
<feature type="binding site" evidence="1">
    <location>
        <begin position="192"/>
        <end position="193"/>
    </location>
    <ligand>
        <name>substrate</name>
    </ligand>
</feature>
<feature type="binding site" evidence="1">
    <location>
        <position position="217"/>
    </location>
    <ligand>
        <name>FMN</name>
        <dbReference type="ChEBI" id="CHEBI:58210"/>
    </ligand>
</feature>
<feature type="binding site" evidence="1">
    <location>
        <begin position="243"/>
        <end position="244"/>
    </location>
    <ligand>
        <name>FMN</name>
        <dbReference type="ChEBI" id="CHEBI:58210"/>
    </ligand>
</feature>
<feature type="binding site" evidence="1">
    <location>
        <begin position="265"/>
        <end position="266"/>
    </location>
    <ligand>
        <name>FMN</name>
        <dbReference type="ChEBI" id="CHEBI:58210"/>
    </ligand>
</feature>